<comment type="function">
    <text evidence="1">Catalyzes the reversible conversion of 2-phosphoglycerate (2-PG) into phosphoenolpyruvate (PEP). It is essential for the degradation of carbohydrates via glycolysis.</text>
</comment>
<comment type="catalytic activity">
    <reaction evidence="1">
        <text>(2R)-2-phosphoglycerate = phosphoenolpyruvate + H2O</text>
        <dbReference type="Rhea" id="RHEA:10164"/>
        <dbReference type="ChEBI" id="CHEBI:15377"/>
        <dbReference type="ChEBI" id="CHEBI:58289"/>
        <dbReference type="ChEBI" id="CHEBI:58702"/>
        <dbReference type="EC" id="4.2.1.11"/>
    </reaction>
</comment>
<comment type="cofactor">
    <cofactor evidence="1">
        <name>Mg(2+)</name>
        <dbReference type="ChEBI" id="CHEBI:18420"/>
    </cofactor>
    <text evidence="1">Binds a second Mg(2+) ion via substrate during catalysis.</text>
</comment>
<comment type="pathway">
    <text evidence="1">Carbohydrate degradation; glycolysis; pyruvate from D-glyceraldehyde 3-phosphate: step 4/5.</text>
</comment>
<comment type="subunit">
    <text evidence="1">Component of the RNA degradosome, a multiprotein complex involved in RNA processing and mRNA degradation.</text>
</comment>
<comment type="subcellular location">
    <subcellularLocation>
        <location evidence="1">Cytoplasm</location>
    </subcellularLocation>
    <subcellularLocation>
        <location evidence="1">Secreted</location>
    </subcellularLocation>
    <subcellularLocation>
        <location evidence="1">Cell surface</location>
    </subcellularLocation>
    <text evidence="1">Fractions of enolase are present in both the cytoplasm and on the cell surface.</text>
</comment>
<comment type="similarity">
    <text evidence="1">Belongs to the enolase family.</text>
</comment>
<proteinExistence type="inferred from homology"/>
<feature type="chain" id="PRO_1000079152" description="Enolase">
    <location>
        <begin position="1"/>
        <end position="431"/>
    </location>
</feature>
<feature type="active site" description="Proton donor" evidence="1">
    <location>
        <position position="209"/>
    </location>
</feature>
<feature type="active site" description="Proton acceptor" evidence="1">
    <location>
        <position position="341"/>
    </location>
</feature>
<feature type="binding site" evidence="1">
    <location>
        <position position="167"/>
    </location>
    <ligand>
        <name>(2R)-2-phosphoglycerate</name>
        <dbReference type="ChEBI" id="CHEBI:58289"/>
    </ligand>
</feature>
<feature type="binding site" evidence="1">
    <location>
        <position position="246"/>
    </location>
    <ligand>
        <name>Mg(2+)</name>
        <dbReference type="ChEBI" id="CHEBI:18420"/>
    </ligand>
</feature>
<feature type="binding site" evidence="1">
    <location>
        <position position="289"/>
    </location>
    <ligand>
        <name>Mg(2+)</name>
        <dbReference type="ChEBI" id="CHEBI:18420"/>
    </ligand>
</feature>
<feature type="binding site" evidence="1">
    <location>
        <position position="316"/>
    </location>
    <ligand>
        <name>Mg(2+)</name>
        <dbReference type="ChEBI" id="CHEBI:18420"/>
    </ligand>
</feature>
<feature type="binding site" evidence="1">
    <location>
        <position position="341"/>
    </location>
    <ligand>
        <name>(2R)-2-phosphoglycerate</name>
        <dbReference type="ChEBI" id="CHEBI:58289"/>
    </ligand>
</feature>
<feature type="binding site" evidence="1">
    <location>
        <position position="370"/>
    </location>
    <ligand>
        <name>(2R)-2-phosphoglycerate</name>
        <dbReference type="ChEBI" id="CHEBI:58289"/>
    </ligand>
</feature>
<feature type="binding site" evidence="1">
    <location>
        <position position="371"/>
    </location>
    <ligand>
        <name>(2R)-2-phosphoglycerate</name>
        <dbReference type="ChEBI" id="CHEBI:58289"/>
    </ligand>
</feature>
<feature type="binding site" evidence="1">
    <location>
        <position position="392"/>
    </location>
    <ligand>
        <name>(2R)-2-phosphoglycerate</name>
        <dbReference type="ChEBI" id="CHEBI:58289"/>
    </ligand>
</feature>
<reference key="1">
    <citation type="submission" date="2007-10" db="EMBL/GenBank/DDBJ databases">
        <title>Complete sequence of Shewanella pealeana ATCC 700345.</title>
        <authorList>
            <consortium name="US DOE Joint Genome Institute"/>
            <person name="Copeland A."/>
            <person name="Lucas S."/>
            <person name="Lapidus A."/>
            <person name="Barry K."/>
            <person name="Glavina del Rio T."/>
            <person name="Dalin E."/>
            <person name="Tice H."/>
            <person name="Pitluck S."/>
            <person name="Chertkov O."/>
            <person name="Brettin T."/>
            <person name="Bruce D."/>
            <person name="Detter J.C."/>
            <person name="Han C."/>
            <person name="Schmutz J."/>
            <person name="Larimer F."/>
            <person name="Land M."/>
            <person name="Hauser L."/>
            <person name="Kyrpides N."/>
            <person name="Kim E."/>
            <person name="Zhao J.-S.Z."/>
            <person name="Manno D."/>
            <person name="Hawari J."/>
            <person name="Richardson P."/>
        </authorList>
    </citation>
    <scope>NUCLEOTIDE SEQUENCE [LARGE SCALE GENOMIC DNA]</scope>
    <source>
        <strain>ATCC 700345 / ANG-SQ1</strain>
    </source>
</reference>
<protein>
    <recommendedName>
        <fullName evidence="1">Enolase</fullName>
        <ecNumber evidence="1">4.2.1.11</ecNumber>
    </recommendedName>
    <alternativeName>
        <fullName evidence="1">2-phospho-D-glycerate hydro-lyase</fullName>
    </alternativeName>
    <alternativeName>
        <fullName evidence="1">2-phosphoglycerate dehydratase</fullName>
    </alternativeName>
</protein>
<name>ENO_SHEPA</name>
<evidence type="ECO:0000255" key="1">
    <source>
        <dbReference type="HAMAP-Rule" id="MF_00318"/>
    </source>
</evidence>
<organism>
    <name type="scientific">Shewanella pealeana (strain ATCC 700345 / ANG-SQ1)</name>
    <dbReference type="NCBI Taxonomy" id="398579"/>
    <lineage>
        <taxon>Bacteria</taxon>
        <taxon>Pseudomonadati</taxon>
        <taxon>Pseudomonadota</taxon>
        <taxon>Gammaproteobacteria</taxon>
        <taxon>Alteromonadales</taxon>
        <taxon>Shewanellaceae</taxon>
        <taxon>Shewanella</taxon>
    </lineage>
</organism>
<sequence>MAKIINIIGREIMDSRGNPTVEAEVHLEGGFMGMAAAPSGASTGSREALELRDGDKARYMGKGVLKAVENINGLIRDALMGKDATAQAELDQIMIDVDGTENKDKLGANAILAVSLAAAKAAAAFKGVPLYAHIADLNGTPGQYSMPVPMMNILNGGEHADNNVDIQEFMVQPVGAKSFREALRMGAEIFHSLKSVLKSKGLSTSVGDEGGFAPDLASNADALAIIKVAVEQAGYTLGTDVTLALDCAASEFYKDGQYDLSGEGKVFSANGFSDFLKSLTEQYPIASIEDGLDESDWDGWAYQTQIMGDKIQLVGDDLFVTNTKILKRGIDNGIANSILIKFNQIGSLTETLAAIRMAKEAGYTVVISHRSGETEDATIADLAVATSAGQIKTGSLCRSDRVAKYNQLLRIEEQLGEKAPYNGLKEIKGQA</sequence>
<gene>
    <name evidence="1" type="primary">eno</name>
    <name type="ordered locus">Spea_1185</name>
</gene>
<dbReference type="EC" id="4.2.1.11" evidence="1"/>
<dbReference type="EMBL" id="CP000851">
    <property type="protein sequence ID" value="ABV86512.1"/>
    <property type="molecule type" value="Genomic_DNA"/>
</dbReference>
<dbReference type="RefSeq" id="WP_012154439.1">
    <property type="nucleotide sequence ID" value="NC_009901.1"/>
</dbReference>
<dbReference type="SMR" id="A8H1S5"/>
<dbReference type="STRING" id="398579.Spea_1185"/>
<dbReference type="KEGG" id="spl:Spea_1185"/>
<dbReference type="eggNOG" id="COG0148">
    <property type="taxonomic scope" value="Bacteria"/>
</dbReference>
<dbReference type="HOGENOM" id="CLU_031223_2_1_6"/>
<dbReference type="OrthoDB" id="9804716at2"/>
<dbReference type="UniPathway" id="UPA00109">
    <property type="reaction ID" value="UER00187"/>
</dbReference>
<dbReference type="Proteomes" id="UP000002608">
    <property type="component" value="Chromosome"/>
</dbReference>
<dbReference type="GO" id="GO:0009986">
    <property type="term" value="C:cell surface"/>
    <property type="evidence" value="ECO:0007669"/>
    <property type="project" value="UniProtKB-SubCell"/>
</dbReference>
<dbReference type="GO" id="GO:0005576">
    <property type="term" value="C:extracellular region"/>
    <property type="evidence" value="ECO:0007669"/>
    <property type="project" value="UniProtKB-SubCell"/>
</dbReference>
<dbReference type="GO" id="GO:0000015">
    <property type="term" value="C:phosphopyruvate hydratase complex"/>
    <property type="evidence" value="ECO:0007669"/>
    <property type="project" value="InterPro"/>
</dbReference>
<dbReference type="GO" id="GO:0000287">
    <property type="term" value="F:magnesium ion binding"/>
    <property type="evidence" value="ECO:0007669"/>
    <property type="project" value="UniProtKB-UniRule"/>
</dbReference>
<dbReference type="GO" id="GO:0004634">
    <property type="term" value="F:phosphopyruvate hydratase activity"/>
    <property type="evidence" value="ECO:0007669"/>
    <property type="project" value="UniProtKB-UniRule"/>
</dbReference>
<dbReference type="GO" id="GO:0006096">
    <property type="term" value="P:glycolytic process"/>
    <property type="evidence" value="ECO:0007669"/>
    <property type="project" value="UniProtKB-UniRule"/>
</dbReference>
<dbReference type="CDD" id="cd03313">
    <property type="entry name" value="enolase"/>
    <property type="match status" value="1"/>
</dbReference>
<dbReference type="FunFam" id="3.20.20.120:FF:000001">
    <property type="entry name" value="Enolase"/>
    <property type="match status" value="1"/>
</dbReference>
<dbReference type="FunFam" id="3.30.390.10:FF:000001">
    <property type="entry name" value="Enolase"/>
    <property type="match status" value="1"/>
</dbReference>
<dbReference type="Gene3D" id="3.20.20.120">
    <property type="entry name" value="Enolase-like C-terminal domain"/>
    <property type="match status" value="1"/>
</dbReference>
<dbReference type="Gene3D" id="3.30.390.10">
    <property type="entry name" value="Enolase-like, N-terminal domain"/>
    <property type="match status" value="1"/>
</dbReference>
<dbReference type="HAMAP" id="MF_00318">
    <property type="entry name" value="Enolase"/>
    <property type="match status" value="1"/>
</dbReference>
<dbReference type="InterPro" id="IPR000941">
    <property type="entry name" value="Enolase"/>
</dbReference>
<dbReference type="InterPro" id="IPR036849">
    <property type="entry name" value="Enolase-like_C_sf"/>
</dbReference>
<dbReference type="InterPro" id="IPR029017">
    <property type="entry name" value="Enolase-like_N"/>
</dbReference>
<dbReference type="InterPro" id="IPR020810">
    <property type="entry name" value="Enolase_C"/>
</dbReference>
<dbReference type="InterPro" id="IPR020809">
    <property type="entry name" value="Enolase_CS"/>
</dbReference>
<dbReference type="InterPro" id="IPR020811">
    <property type="entry name" value="Enolase_N"/>
</dbReference>
<dbReference type="NCBIfam" id="TIGR01060">
    <property type="entry name" value="eno"/>
    <property type="match status" value="1"/>
</dbReference>
<dbReference type="PANTHER" id="PTHR11902">
    <property type="entry name" value="ENOLASE"/>
    <property type="match status" value="1"/>
</dbReference>
<dbReference type="PANTHER" id="PTHR11902:SF1">
    <property type="entry name" value="ENOLASE"/>
    <property type="match status" value="1"/>
</dbReference>
<dbReference type="Pfam" id="PF00113">
    <property type="entry name" value="Enolase_C"/>
    <property type="match status" value="1"/>
</dbReference>
<dbReference type="Pfam" id="PF03952">
    <property type="entry name" value="Enolase_N"/>
    <property type="match status" value="1"/>
</dbReference>
<dbReference type="PIRSF" id="PIRSF001400">
    <property type="entry name" value="Enolase"/>
    <property type="match status" value="1"/>
</dbReference>
<dbReference type="PRINTS" id="PR00148">
    <property type="entry name" value="ENOLASE"/>
</dbReference>
<dbReference type="SFLD" id="SFLDS00001">
    <property type="entry name" value="Enolase"/>
    <property type="match status" value="1"/>
</dbReference>
<dbReference type="SFLD" id="SFLDF00002">
    <property type="entry name" value="enolase"/>
    <property type="match status" value="1"/>
</dbReference>
<dbReference type="SMART" id="SM01192">
    <property type="entry name" value="Enolase_C"/>
    <property type="match status" value="1"/>
</dbReference>
<dbReference type="SMART" id="SM01193">
    <property type="entry name" value="Enolase_N"/>
    <property type="match status" value="1"/>
</dbReference>
<dbReference type="SUPFAM" id="SSF51604">
    <property type="entry name" value="Enolase C-terminal domain-like"/>
    <property type="match status" value="1"/>
</dbReference>
<dbReference type="SUPFAM" id="SSF54826">
    <property type="entry name" value="Enolase N-terminal domain-like"/>
    <property type="match status" value="1"/>
</dbReference>
<dbReference type="PROSITE" id="PS00164">
    <property type="entry name" value="ENOLASE"/>
    <property type="match status" value="1"/>
</dbReference>
<accession>A8H1S5</accession>
<keyword id="KW-0963">Cytoplasm</keyword>
<keyword id="KW-0324">Glycolysis</keyword>
<keyword id="KW-0456">Lyase</keyword>
<keyword id="KW-0460">Magnesium</keyword>
<keyword id="KW-0479">Metal-binding</keyword>
<keyword id="KW-1185">Reference proteome</keyword>
<keyword id="KW-0964">Secreted</keyword>